<organism>
    <name type="scientific">Escherichia coli (strain K12)</name>
    <dbReference type="NCBI Taxonomy" id="83333"/>
    <lineage>
        <taxon>Bacteria</taxon>
        <taxon>Pseudomonadati</taxon>
        <taxon>Pseudomonadota</taxon>
        <taxon>Gammaproteobacteria</taxon>
        <taxon>Enterobacterales</taxon>
        <taxon>Enterobacteriaceae</taxon>
        <taxon>Escherichia</taxon>
    </lineage>
</organism>
<dbReference type="EMBL" id="U18997">
    <property type="protein sequence ID" value="AAA58211.1"/>
    <property type="status" value="ALT_INIT"/>
    <property type="molecule type" value="Genomic_DNA"/>
</dbReference>
<dbReference type="EMBL" id="U00096">
    <property type="protein sequence ID" value="AAC76438.2"/>
    <property type="molecule type" value="Genomic_DNA"/>
</dbReference>
<dbReference type="EMBL" id="AP009048">
    <property type="protein sequence ID" value="BAE77878.1"/>
    <property type="molecule type" value="Genomic_DNA"/>
</dbReference>
<dbReference type="PIR" id="H65136">
    <property type="entry name" value="H65136"/>
</dbReference>
<dbReference type="RefSeq" id="NP_417872.2">
    <property type="nucleotide sequence ID" value="NC_000913.3"/>
</dbReference>
<dbReference type="RefSeq" id="WP_001333371.1">
    <property type="nucleotide sequence ID" value="NZ_SSZK01000008.1"/>
</dbReference>
<dbReference type="BioGRID" id="4261222">
    <property type="interactions" value="9"/>
</dbReference>
<dbReference type="FunCoup" id="P46846">
    <property type="interactions" value="336"/>
</dbReference>
<dbReference type="STRING" id="511145.b3413"/>
<dbReference type="PaxDb" id="511145-b3413"/>
<dbReference type="EnsemblBacteria" id="AAC76438">
    <property type="protein sequence ID" value="AAC76438"/>
    <property type="gene ID" value="b3413"/>
</dbReference>
<dbReference type="GeneID" id="947915"/>
<dbReference type="KEGG" id="ecj:JW5691"/>
<dbReference type="KEGG" id="eco:b3413"/>
<dbReference type="KEGG" id="ecoc:C3026_18515"/>
<dbReference type="PATRIC" id="fig|1411691.4.peg.3315"/>
<dbReference type="EchoBASE" id="EB2770"/>
<dbReference type="eggNOG" id="COG1040">
    <property type="taxonomic scope" value="Bacteria"/>
</dbReference>
<dbReference type="HOGENOM" id="CLU_054549_0_2_6"/>
<dbReference type="InParanoid" id="P46846"/>
<dbReference type="OMA" id="DAAYWNE"/>
<dbReference type="OrthoDB" id="9793412at2"/>
<dbReference type="PhylomeDB" id="P46846"/>
<dbReference type="BioCyc" id="EcoCyc:G7747-MONOMER"/>
<dbReference type="PRO" id="PR:P46846"/>
<dbReference type="Proteomes" id="UP000000625">
    <property type="component" value="Chromosome"/>
</dbReference>
<dbReference type="GO" id="GO:0015976">
    <property type="term" value="P:carbon utilization"/>
    <property type="evidence" value="ECO:0000315"/>
    <property type="project" value="EcoCyc"/>
</dbReference>
<dbReference type="GO" id="GO:0006308">
    <property type="term" value="P:DNA catabolic process"/>
    <property type="evidence" value="ECO:0000315"/>
    <property type="project" value="EcoCyc"/>
</dbReference>
<dbReference type="CDD" id="cd06223">
    <property type="entry name" value="PRTases_typeI"/>
    <property type="match status" value="1"/>
</dbReference>
<dbReference type="FunFam" id="3.40.50.2020:FF:000054">
    <property type="entry name" value="ComF family protein"/>
    <property type="match status" value="1"/>
</dbReference>
<dbReference type="Gene3D" id="3.40.50.2020">
    <property type="match status" value="1"/>
</dbReference>
<dbReference type="InterPro" id="IPR051910">
    <property type="entry name" value="ComF/GntX_DNA_util-trans"/>
</dbReference>
<dbReference type="InterPro" id="IPR005222">
    <property type="entry name" value="Competence_ComF"/>
</dbReference>
<dbReference type="InterPro" id="IPR000836">
    <property type="entry name" value="PRibTrfase_dom"/>
</dbReference>
<dbReference type="InterPro" id="IPR029057">
    <property type="entry name" value="PRTase-like"/>
</dbReference>
<dbReference type="NCBIfam" id="TIGR00201">
    <property type="entry name" value="comF"/>
    <property type="match status" value="1"/>
</dbReference>
<dbReference type="NCBIfam" id="NF008616">
    <property type="entry name" value="PRK11595.1"/>
    <property type="match status" value="1"/>
</dbReference>
<dbReference type="PANTHER" id="PTHR47505">
    <property type="entry name" value="DNA UTILIZATION PROTEIN YHGH"/>
    <property type="match status" value="1"/>
</dbReference>
<dbReference type="PANTHER" id="PTHR47505:SF1">
    <property type="entry name" value="DNA UTILIZATION PROTEIN YHGH"/>
    <property type="match status" value="1"/>
</dbReference>
<dbReference type="Pfam" id="PF00156">
    <property type="entry name" value="Pribosyltran"/>
    <property type="match status" value="1"/>
</dbReference>
<dbReference type="SUPFAM" id="SSF53271">
    <property type="entry name" value="PRTase-like"/>
    <property type="match status" value="1"/>
</dbReference>
<gene>
    <name evidence="2" type="primary">gntX</name>
    <name type="synonym">yhgH</name>
    <name type="ordered locus">b3413</name>
    <name type="ordered locus">JW5691</name>
</gene>
<protein>
    <recommendedName>
        <fullName evidence="4">DNA utilization protein YhgH</fullName>
    </recommendedName>
    <alternativeName>
        <fullName>Protein GntX</fullName>
    </alternativeName>
</protein>
<reference key="1">
    <citation type="journal article" date="1997" name="Science">
        <title>The complete genome sequence of Escherichia coli K-12.</title>
        <authorList>
            <person name="Blattner F.R."/>
            <person name="Plunkett G. III"/>
            <person name="Bloch C.A."/>
            <person name="Perna N.T."/>
            <person name="Burland V."/>
            <person name="Riley M."/>
            <person name="Collado-Vides J."/>
            <person name="Glasner J.D."/>
            <person name="Rode C.K."/>
            <person name="Mayhew G.F."/>
            <person name="Gregor J."/>
            <person name="Davis N.W."/>
            <person name="Kirkpatrick H.A."/>
            <person name="Goeden M.A."/>
            <person name="Rose D.J."/>
            <person name="Mau B."/>
            <person name="Shao Y."/>
        </authorList>
    </citation>
    <scope>NUCLEOTIDE SEQUENCE [LARGE SCALE GENOMIC DNA]</scope>
    <source>
        <strain>K12 / MG1655 / ATCC 47076</strain>
    </source>
</reference>
<reference key="2">
    <citation type="journal article" date="2006" name="Mol. Syst. Biol.">
        <title>Highly accurate genome sequences of Escherichia coli K-12 strains MG1655 and W3110.</title>
        <authorList>
            <person name="Hayashi K."/>
            <person name="Morooka N."/>
            <person name="Yamamoto Y."/>
            <person name="Fujita K."/>
            <person name="Isono K."/>
            <person name="Choi S."/>
            <person name="Ohtsubo E."/>
            <person name="Baba T."/>
            <person name="Wanner B.L."/>
            <person name="Mori H."/>
            <person name="Horiuchi T."/>
        </authorList>
    </citation>
    <scope>NUCLEOTIDE SEQUENCE [LARGE SCALE GENOMIC DNA]</scope>
    <source>
        <strain>K12 / W3110 / ATCC 27325 / DSM 5911</strain>
    </source>
</reference>
<reference key="3">
    <citation type="journal article" date="1998" name="J. Basic Microbiol.">
        <title>The gluconate high affinity transport of GntI in Escherichia coli involves a multicomponent complex system.</title>
        <authorList>
            <person name="Porco A."/>
            <person name="Alonso G."/>
            <person name="Isturiz T."/>
        </authorList>
    </citation>
    <scope>FUNCTION</scope>
    <source>
        <strain>K12 / W3110 / ATCC 27325 / DSM 5911</strain>
    </source>
</reference>
<reference key="4">
    <citation type="journal article" date="2006" name="J. Bacteriol.">
        <title>Escherichia coli competence gene homologs are essential for competitive fitness and the use of DNA as a nutrient.</title>
        <authorList>
            <person name="Palchevskiy V."/>
            <person name="Finkel S.E."/>
        </authorList>
    </citation>
    <scope>FUNCTION</scope>
    <scope>DISRUPTION PHENOTYPE</scope>
    <source>
        <strain>K12 / W3110 / ZK126</strain>
    </source>
</reference>
<name>GNTX_ECOLI</name>
<comment type="function">
    <text evidence="1 5">Required for the use of extracellular DNA as a nutrient (PubMed:16707682). Has been suggested to be involved in gluconate metabolism (PubMed:9871335).</text>
</comment>
<comment type="disruption phenotype">
    <text evidence="1">Mutants are unable to use DNA as a sole carbon and energy source and show decreased competitive fitness when cocultured with wild-type cells.</text>
</comment>
<comment type="similarity">
    <text evidence="3">Belongs to the ComF/GntX family.</text>
</comment>
<comment type="sequence caution" evidence="3">
    <conflict type="erroneous initiation">
        <sequence resource="EMBL-CDS" id="AAA58211"/>
    </conflict>
    <text>Extended N-terminus.</text>
</comment>
<feature type="chain" id="PRO_0000209458" description="DNA utilization protein YhgH">
    <location>
        <begin position="1"/>
        <end position="227"/>
    </location>
</feature>
<sequence>MLTVPGLCWLCRMPLALGHWGICSVCSRATRTDKTLCPQCGLPATHSHLPCGRCLQKPPPWQRLVTVADYAPPLSPLIHQLKFSRRSEIASALSRLLLLEVLHARRTTGLQLPDRIVSVPLWQRRHWRRGFNQSDLLCQPLSRWLHCQWDSEAVTRTRATATQHFLSARLRKRNLKNAFRLELPVQGRHMVIVDDVVTTGSTVAEIAQLLLRNGAAAVQVWCLCRTL</sequence>
<accession>P46846</accession>
<accession>Q2M778</accession>
<proteinExistence type="inferred from homology"/>
<keyword id="KW-1185">Reference proteome</keyword>
<evidence type="ECO:0000269" key="1">
    <source>
    </source>
</evidence>
<evidence type="ECO:0000303" key="2">
    <source>
    </source>
</evidence>
<evidence type="ECO:0000305" key="3"/>
<evidence type="ECO:0000305" key="4">
    <source>
    </source>
</evidence>
<evidence type="ECO:0000305" key="5">
    <source>
    </source>
</evidence>